<accession>Q40313</accession>
<organism>
    <name type="scientific">Medicago sativa</name>
    <name type="common">Alfalfa</name>
    <dbReference type="NCBI Taxonomy" id="3879"/>
    <lineage>
        <taxon>Eukaryota</taxon>
        <taxon>Viridiplantae</taxon>
        <taxon>Streptophyta</taxon>
        <taxon>Embryophyta</taxon>
        <taxon>Tracheophyta</taxon>
        <taxon>Spermatophyta</taxon>
        <taxon>Magnoliopsida</taxon>
        <taxon>eudicotyledons</taxon>
        <taxon>Gunneridae</taxon>
        <taxon>Pentapetalae</taxon>
        <taxon>rosids</taxon>
        <taxon>fabids</taxon>
        <taxon>Fabales</taxon>
        <taxon>Fabaceae</taxon>
        <taxon>Papilionoideae</taxon>
        <taxon>50 kb inversion clade</taxon>
        <taxon>NPAAA clade</taxon>
        <taxon>Hologalegina</taxon>
        <taxon>IRL clade</taxon>
        <taxon>Trifolieae</taxon>
        <taxon>Medicago</taxon>
    </lineage>
</organism>
<comment type="function">
    <text>Methylates caffeoyl-CoA to feruloyl-CoA and 5-hydroxyferuloyl-CoA to sinapoyl-CoA. Plays a role in the synthesis of feruloylated polysaccharides. Involved in the reinforcement of the plant cell wall. Also involved in the responding to wounding or pathogen challenge by the increased formation of cell wall-bound ferulic acid polymers.</text>
</comment>
<comment type="catalytic activity">
    <reaction>
        <text>(E)-caffeoyl-CoA + S-adenosyl-L-methionine = (E)-feruloyl-CoA + S-adenosyl-L-homocysteine + H(+)</text>
        <dbReference type="Rhea" id="RHEA:16925"/>
        <dbReference type="ChEBI" id="CHEBI:15378"/>
        <dbReference type="ChEBI" id="CHEBI:57856"/>
        <dbReference type="ChEBI" id="CHEBI:59789"/>
        <dbReference type="ChEBI" id="CHEBI:87136"/>
        <dbReference type="ChEBI" id="CHEBI:87305"/>
        <dbReference type="EC" id="2.1.1.104"/>
    </reaction>
</comment>
<comment type="cofactor">
    <cofactor evidence="2">
        <name>Ca(2+)</name>
        <dbReference type="ChEBI" id="CHEBI:29108"/>
    </cofactor>
    <cofactor evidence="2">
        <name>Mg(2+)</name>
        <dbReference type="ChEBI" id="CHEBI:18420"/>
    </cofactor>
    <cofactor evidence="2">
        <name>Zn(2+)</name>
        <dbReference type="ChEBI" id="CHEBI:29105"/>
    </cofactor>
    <text evidence="2">Binds 1 divalent metal cation per subunit. Fully active with Ca(2+), Mg(2+) or Zn(2+) ions. Active at 35% with Mn(2+) ion.</text>
</comment>
<comment type="pathway">
    <text>Aromatic compound metabolism; phenylpropanoid biosynthesis.</text>
</comment>
<comment type="subunit">
    <text evidence="2">Homodimer.</text>
</comment>
<comment type="similarity">
    <text evidence="1">Belongs to the class I-like SAM-binding methyltransferase superfamily. Cation-dependent O-methyltransferase family. CCoAMT subfamily.</text>
</comment>
<dbReference type="EC" id="2.1.1.104"/>
<dbReference type="EMBL" id="U20736">
    <property type="protein sequence ID" value="AAC28973.1"/>
    <property type="molecule type" value="mRNA"/>
</dbReference>
<dbReference type="PIR" id="T09399">
    <property type="entry name" value="T09399"/>
</dbReference>
<dbReference type="PDB" id="1SUI">
    <property type="method" value="X-ray"/>
    <property type="resolution" value="2.70 A"/>
    <property type="chains" value="A/B/C/D=1-247"/>
</dbReference>
<dbReference type="PDB" id="1SUS">
    <property type="method" value="X-ray"/>
    <property type="resolution" value="2.70 A"/>
    <property type="chains" value="A/B/C/D=1-247"/>
</dbReference>
<dbReference type="PDBsum" id="1SUI"/>
<dbReference type="PDBsum" id="1SUS"/>
<dbReference type="SMR" id="Q40313"/>
<dbReference type="BRENDA" id="2.1.1.104">
    <property type="organism ID" value="3078"/>
</dbReference>
<dbReference type="UniPathway" id="UPA00711"/>
<dbReference type="EvolutionaryTrace" id="Q40313"/>
<dbReference type="GO" id="GO:0042409">
    <property type="term" value="F:caffeoyl-CoA O-methyltransferase activity"/>
    <property type="evidence" value="ECO:0007669"/>
    <property type="project" value="UniProtKB-EC"/>
</dbReference>
<dbReference type="GO" id="GO:0046872">
    <property type="term" value="F:metal ion binding"/>
    <property type="evidence" value="ECO:0007669"/>
    <property type="project" value="UniProtKB-KW"/>
</dbReference>
<dbReference type="GO" id="GO:0009809">
    <property type="term" value="P:lignin biosynthetic process"/>
    <property type="evidence" value="ECO:0007669"/>
    <property type="project" value="UniProtKB-KW"/>
</dbReference>
<dbReference type="GO" id="GO:0032259">
    <property type="term" value="P:methylation"/>
    <property type="evidence" value="ECO:0007669"/>
    <property type="project" value="UniProtKB-KW"/>
</dbReference>
<dbReference type="FunFam" id="3.40.50.150:FF:000147">
    <property type="entry name" value="Caffeoyl-CoA O-methyltransferase 1"/>
    <property type="match status" value="1"/>
</dbReference>
<dbReference type="Gene3D" id="3.40.50.150">
    <property type="entry name" value="Vaccinia Virus protein VP39"/>
    <property type="match status" value="1"/>
</dbReference>
<dbReference type="InterPro" id="IPR050362">
    <property type="entry name" value="Cation-dep_OMT"/>
</dbReference>
<dbReference type="InterPro" id="IPR029063">
    <property type="entry name" value="SAM-dependent_MTases_sf"/>
</dbReference>
<dbReference type="InterPro" id="IPR002935">
    <property type="entry name" value="SAM_O-MeTrfase"/>
</dbReference>
<dbReference type="PANTHER" id="PTHR10509:SF74">
    <property type="entry name" value="CAFFEOYL-COA O-METHYLTRANSFERASE 2"/>
    <property type="match status" value="1"/>
</dbReference>
<dbReference type="PANTHER" id="PTHR10509">
    <property type="entry name" value="O-METHYLTRANSFERASE-RELATED"/>
    <property type="match status" value="1"/>
</dbReference>
<dbReference type="Pfam" id="PF01596">
    <property type="entry name" value="Methyltransf_3"/>
    <property type="match status" value="1"/>
</dbReference>
<dbReference type="SUPFAM" id="SSF53335">
    <property type="entry name" value="S-adenosyl-L-methionine-dependent methyltransferases"/>
    <property type="match status" value="1"/>
</dbReference>
<dbReference type="PROSITE" id="PS51682">
    <property type="entry name" value="SAM_OMT_I"/>
    <property type="match status" value="1"/>
</dbReference>
<keyword id="KW-0002">3D-structure</keyword>
<keyword id="KW-0106">Calcium</keyword>
<keyword id="KW-0438">Lignin biosynthesis</keyword>
<keyword id="KW-0479">Metal-binding</keyword>
<keyword id="KW-0489">Methyltransferase</keyword>
<keyword id="KW-0949">S-adenosyl-L-methionine</keyword>
<keyword id="KW-0808">Transferase</keyword>
<name>CAMT_MEDSA</name>
<gene>
    <name type="primary">CCOMT</name>
</gene>
<proteinExistence type="evidence at protein level"/>
<feature type="chain" id="PRO_0000165686" description="Caffeoyl-CoA O-methyltransferase">
    <location>
        <begin position="1"/>
        <end position="247"/>
    </location>
</feature>
<feature type="binding site" evidence="3">
    <location>
        <position position="21"/>
    </location>
    <ligand>
        <name>substrate</name>
    </ligand>
</feature>
<feature type="binding site" evidence="2">
    <location>
        <position position="63"/>
    </location>
    <ligand>
        <name>S-adenosyl-L-methionine</name>
        <dbReference type="ChEBI" id="CHEBI:59789"/>
    </ligand>
</feature>
<feature type="binding site" evidence="2">
    <location>
        <position position="85"/>
    </location>
    <ligand>
        <name>S-adenosyl-L-methionine</name>
        <dbReference type="ChEBI" id="CHEBI:59789"/>
    </ligand>
</feature>
<feature type="binding site" evidence="2">
    <location>
        <begin position="87"/>
        <end position="88"/>
    </location>
    <ligand>
        <name>S-adenosyl-L-methionine</name>
        <dbReference type="ChEBI" id="CHEBI:59789"/>
    </ligand>
</feature>
<feature type="binding site" evidence="2">
    <location>
        <position position="93"/>
    </location>
    <ligand>
        <name>S-adenosyl-L-methionine</name>
        <dbReference type="ChEBI" id="CHEBI:59789"/>
    </ligand>
</feature>
<feature type="binding site" evidence="2">
    <location>
        <position position="111"/>
    </location>
    <ligand>
        <name>S-adenosyl-L-methionine</name>
        <dbReference type="ChEBI" id="CHEBI:59789"/>
    </ligand>
</feature>
<feature type="binding site" evidence="2">
    <location>
        <position position="140"/>
    </location>
    <ligand>
        <name>S-adenosyl-L-methionine</name>
        <dbReference type="ChEBI" id="CHEBI:59789"/>
    </ligand>
</feature>
<feature type="binding site" evidence="2">
    <location>
        <position position="163"/>
    </location>
    <ligand>
        <name>a divalent metal cation</name>
        <dbReference type="ChEBI" id="CHEBI:60240"/>
    </ligand>
</feature>
<feature type="binding site" evidence="3">
    <location>
        <position position="163"/>
    </location>
    <ligand>
        <name>substrate</name>
    </ligand>
</feature>
<feature type="binding site" evidence="2">
    <location>
        <position position="165"/>
    </location>
    <ligand>
        <name>S-adenosyl-L-methionine</name>
        <dbReference type="ChEBI" id="CHEBI:59789"/>
    </ligand>
</feature>
<feature type="binding site" evidence="2">
    <location>
        <position position="189"/>
    </location>
    <ligand>
        <name>a divalent metal cation</name>
        <dbReference type="ChEBI" id="CHEBI:60240"/>
    </ligand>
</feature>
<feature type="binding site" evidence="2">
    <location>
        <position position="190"/>
    </location>
    <ligand>
        <name>a divalent metal cation</name>
        <dbReference type="ChEBI" id="CHEBI:60240"/>
    </ligand>
</feature>
<feature type="binding site" evidence="3">
    <location>
        <position position="194"/>
    </location>
    <ligand>
        <name>substrate</name>
    </ligand>
</feature>
<feature type="strand" evidence="4">
    <location>
        <begin position="23"/>
        <end position="25"/>
    </location>
</feature>
<feature type="helix" evidence="4">
    <location>
        <begin position="27"/>
        <end position="37"/>
    </location>
</feature>
<feature type="strand" evidence="4">
    <location>
        <begin position="39"/>
        <end position="41"/>
    </location>
</feature>
<feature type="helix" evidence="4">
    <location>
        <begin position="45"/>
        <end position="54"/>
    </location>
</feature>
<feature type="helix" evidence="4">
    <location>
        <begin position="59"/>
        <end position="61"/>
    </location>
</feature>
<feature type="helix" evidence="4">
    <location>
        <begin position="65"/>
        <end position="77"/>
    </location>
</feature>
<feature type="strand" evidence="4">
    <location>
        <begin position="82"/>
        <end position="86"/>
    </location>
</feature>
<feature type="helix" evidence="4">
    <location>
        <begin position="89"/>
        <end position="91"/>
    </location>
</feature>
<feature type="helix" evidence="4">
    <location>
        <begin position="92"/>
        <end position="100"/>
    </location>
</feature>
<feature type="strand" evidence="4">
    <location>
        <begin position="106"/>
        <end position="112"/>
    </location>
</feature>
<feature type="helix" evidence="4">
    <location>
        <begin position="115"/>
        <end position="126"/>
    </location>
</feature>
<feature type="helix" evidence="4">
    <location>
        <begin position="130"/>
        <end position="132"/>
    </location>
</feature>
<feature type="strand" evidence="4">
    <location>
        <begin position="133"/>
        <end position="138"/>
    </location>
</feature>
<feature type="helix" evidence="4">
    <location>
        <begin position="140"/>
        <end position="149"/>
    </location>
</feature>
<feature type="helix" evidence="4">
    <location>
        <begin position="151"/>
        <end position="153"/>
    </location>
</feature>
<feature type="strand" evidence="4">
    <location>
        <begin position="157"/>
        <end position="162"/>
    </location>
</feature>
<feature type="helix" evidence="4">
    <location>
        <begin position="169"/>
        <end position="179"/>
    </location>
</feature>
<feature type="strand" evidence="4">
    <location>
        <begin position="186"/>
        <end position="189"/>
    </location>
</feature>
<feature type="turn" evidence="5">
    <location>
        <begin position="190"/>
        <end position="192"/>
    </location>
</feature>
<feature type="helix" evidence="4">
    <location>
        <begin position="193"/>
        <end position="198"/>
    </location>
</feature>
<feature type="helix" evidence="4">
    <location>
        <begin position="207"/>
        <end position="224"/>
    </location>
</feature>
<feature type="strand" evidence="4">
    <location>
        <begin position="232"/>
        <end position="234"/>
    </location>
</feature>
<feature type="strand" evidence="4">
    <location>
        <begin position="240"/>
        <end position="243"/>
    </location>
</feature>
<protein>
    <recommendedName>
        <fullName>Caffeoyl-CoA O-methyltransferase</fullName>
        <ecNumber>2.1.1.104</ecNumber>
    </recommendedName>
    <alternativeName>
        <fullName>Trans-caffeoyl-CoA 3-O-methyltransferase</fullName>
        <shortName>CCoAMT</shortName>
        <shortName>CCoAOMT</shortName>
    </alternativeName>
</protein>
<reference key="1">
    <citation type="journal article" date="1998" name="Plant Physiol.">
        <title>Developmental expression and substrate specificities of alfalfa caffeic acid 3-O-methyltransferase and caffeoyl coenzyme A 3-O-methyltransferase in relation to lignification.</title>
        <authorList>
            <person name="Inoue K."/>
            <person name="Sewalt V.J.H."/>
            <person name="Ballance G.M."/>
            <person name="Ni W."/>
            <person name="Sturzer C."/>
            <person name="Dixon R.A."/>
        </authorList>
    </citation>
    <scope>NUCLEOTIDE SEQUENCE [MRNA]</scope>
    <source>
        <strain>cv. Apollo</strain>
    </source>
</reference>
<reference key="2">
    <citation type="journal article" date="2005" name="Plant Physiol.">
        <title>Crystal structures of alfalfa caffeoyl coenzyme A 3-O-methyltransferase.</title>
        <authorList>
            <person name="Ferrer J.-L."/>
            <person name="Zubieta C."/>
            <person name="Dixon R.A."/>
            <person name="Noel J.P."/>
        </authorList>
    </citation>
    <scope>X-RAY CRYSTALLOGRAPHY (2.7 ANGSTROMS) IN COMPLEX WITH SUBSTRATE ANALOGS</scope>
    <scope>COFACTOR</scope>
</reference>
<evidence type="ECO:0000255" key="1">
    <source>
        <dbReference type="PROSITE-ProRule" id="PRU01019"/>
    </source>
</evidence>
<evidence type="ECO:0000269" key="2">
    <source>
    </source>
</evidence>
<evidence type="ECO:0000305" key="3">
    <source>
    </source>
</evidence>
<evidence type="ECO:0007829" key="4">
    <source>
        <dbReference type="PDB" id="1SUI"/>
    </source>
</evidence>
<evidence type="ECO:0007829" key="5">
    <source>
        <dbReference type="PDB" id="1SUS"/>
    </source>
</evidence>
<sequence length="247" mass="27999">MATNEDQKQTESGRHQEVGHKSLLQSDALYQYILETSVFPREHEAMKELREVTAKHPWNIMTTSADEGQFLSMLLKLINAKNTMEIGVYTGYSLLATALAIPEDGKILAMDINKENYELGLPVIKKAGVDHKIDFREGPALPVLDEMIKDEKNHGSYDFIFVDADKDNYLNYHKRLIDLVKVGGVIGYDNTLWNGSVVAPPDAPLRKYVRYYRDFVLELNKALAVDPRIEICMLPVGDGITICRRIK</sequence>